<proteinExistence type="inferred from homology"/>
<reference evidence="9" key="1">
    <citation type="journal article" date="2007" name="Science">
        <title>Legumes symbioses: absence of nod genes in photosynthetic bradyrhizobia.</title>
        <authorList>
            <person name="Giraud E."/>
            <person name="Moulin L."/>
            <person name="Vallenet D."/>
            <person name="Barbe V."/>
            <person name="Cytryn E."/>
            <person name="Avarre J.-C."/>
            <person name="Jaubert M."/>
            <person name="Simon D."/>
            <person name="Cartieaux F."/>
            <person name="Prin Y."/>
            <person name="Bena G."/>
            <person name="Hannibal L."/>
            <person name="Fardoux J."/>
            <person name="Kojadinovic M."/>
            <person name="Vuillet L."/>
            <person name="Lajus A."/>
            <person name="Cruveiller S."/>
            <person name="Rouy Z."/>
            <person name="Mangenot S."/>
            <person name="Segurens B."/>
            <person name="Dossat C."/>
            <person name="Franck W.L."/>
            <person name="Chang W.-S."/>
            <person name="Saunders E."/>
            <person name="Bruce D."/>
            <person name="Richardson P."/>
            <person name="Normand P."/>
            <person name="Dreyfus B."/>
            <person name="Pignol D."/>
            <person name="Stacey G."/>
            <person name="Emerich D."/>
            <person name="Vermeglio A."/>
            <person name="Medigue C."/>
            <person name="Sadowsky M."/>
        </authorList>
    </citation>
    <scope>NUCLEOTIDE SEQUENCE [LARGE SCALE GENOMIC DNA]</scope>
    <source>
        <strain evidence="9">ORS 278</strain>
    </source>
</reference>
<keyword id="KW-0997">Cell inner membrane</keyword>
<keyword id="KW-1003">Cell membrane</keyword>
<keyword id="KW-0249">Electron transport</keyword>
<keyword id="KW-0349">Heme</keyword>
<keyword id="KW-0375">Hydrogen ion transport</keyword>
<keyword id="KW-0406">Ion transport</keyword>
<keyword id="KW-0408">Iron</keyword>
<keyword id="KW-0472">Membrane</keyword>
<keyword id="KW-0479">Metal-binding</keyword>
<keyword id="KW-0560">Oxidoreductase</keyword>
<keyword id="KW-1185">Reference proteome</keyword>
<keyword id="KW-0677">Repeat</keyword>
<keyword id="KW-0679">Respiratory chain</keyword>
<keyword id="KW-0812">Transmembrane</keyword>
<keyword id="KW-1133">Transmembrane helix</keyword>
<keyword id="KW-0813">Transport</keyword>
<evidence type="ECO:0000250" key="1">
    <source>
        <dbReference type="UniProtKB" id="D5ARP7"/>
    </source>
</evidence>
<evidence type="ECO:0000250" key="2">
    <source>
        <dbReference type="UniProtKB" id="D9IA45"/>
    </source>
</evidence>
<evidence type="ECO:0000250" key="3">
    <source>
        <dbReference type="UniProtKB" id="Q03075"/>
    </source>
</evidence>
<evidence type="ECO:0000250" key="4">
    <source>
        <dbReference type="UniProtKB" id="Q52689"/>
    </source>
</evidence>
<evidence type="ECO:0000250" key="5">
    <source>
        <dbReference type="UniProtKB" id="Q8KS19"/>
    </source>
</evidence>
<evidence type="ECO:0000255" key="6"/>
<evidence type="ECO:0000255" key="7">
    <source>
        <dbReference type="PROSITE-ProRule" id="PRU00433"/>
    </source>
</evidence>
<evidence type="ECO:0000305" key="8"/>
<evidence type="ECO:0000312" key="9">
    <source>
        <dbReference type="EMBL" id="CAL76266.1"/>
    </source>
</evidence>
<dbReference type="EMBL" id="CU234118">
    <property type="protein sequence ID" value="CAL76266.1"/>
    <property type="molecule type" value="Genomic_DNA"/>
</dbReference>
<dbReference type="RefSeq" id="WP_011925478.1">
    <property type="nucleotide sequence ID" value="NC_009445.1"/>
</dbReference>
<dbReference type="SMR" id="A4YQU0"/>
<dbReference type="STRING" id="114615.BRADO2441"/>
<dbReference type="KEGG" id="bra:BRADO2441"/>
<dbReference type="eggNOG" id="COG2010">
    <property type="taxonomic scope" value="Bacteria"/>
</dbReference>
<dbReference type="HOGENOM" id="CLU_047545_2_0_5"/>
<dbReference type="OrthoDB" id="9811281at2"/>
<dbReference type="UniPathway" id="UPA00705"/>
<dbReference type="Proteomes" id="UP000001994">
    <property type="component" value="Chromosome"/>
</dbReference>
<dbReference type="GO" id="GO:0005886">
    <property type="term" value="C:plasma membrane"/>
    <property type="evidence" value="ECO:0007669"/>
    <property type="project" value="UniProtKB-SubCell"/>
</dbReference>
<dbReference type="GO" id="GO:0009055">
    <property type="term" value="F:electron transfer activity"/>
    <property type="evidence" value="ECO:0007669"/>
    <property type="project" value="InterPro"/>
</dbReference>
<dbReference type="GO" id="GO:0020037">
    <property type="term" value="F:heme binding"/>
    <property type="evidence" value="ECO:0007669"/>
    <property type="project" value="InterPro"/>
</dbReference>
<dbReference type="GO" id="GO:0005506">
    <property type="term" value="F:iron ion binding"/>
    <property type="evidence" value="ECO:0007669"/>
    <property type="project" value="InterPro"/>
</dbReference>
<dbReference type="GO" id="GO:0016491">
    <property type="term" value="F:oxidoreductase activity"/>
    <property type="evidence" value="ECO:0007669"/>
    <property type="project" value="UniProtKB-KW"/>
</dbReference>
<dbReference type="GO" id="GO:0006119">
    <property type="term" value="P:oxidative phosphorylation"/>
    <property type="evidence" value="ECO:0007669"/>
    <property type="project" value="UniProtKB-UniPathway"/>
</dbReference>
<dbReference type="GO" id="GO:1902600">
    <property type="term" value="P:proton transmembrane transport"/>
    <property type="evidence" value="ECO:0007669"/>
    <property type="project" value="UniProtKB-KW"/>
</dbReference>
<dbReference type="Gene3D" id="6.10.280.130">
    <property type="match status" value="1"/>
</dbReference>
<dbReference type="Gene3D" id="1.10.760.10">
    <property type="entry name" value="Cytochrome c-like domain"/>
    <property type="match status" value="2"/>
</dbReference>
<dbReference type="InterPro" id="IPR032858">
    <property type="entry name" value="CcoP_N"/>
</dbReference>
<dbReference type="InterPro" id="IPR038414">
    <property type="entry name" value="CcoP_N_sf"/>
</dbReference>
<dbReference type="InterPro" id="IPR009056">
    <property type="entry name" value="Cyt_c-like_dom"/>
</dbReference>
<dbReference type="InterPro" id="IPR036909">
    <property type="entry name" value="Cyt_c-like_dom_sf"/>
</dbReference>
<dbReference type="InterPro" id="IPR008168">
    <property type="entry name" value="Cyt_C_IC"/>
</dbReference>
<dbReference type="InterPro" id="IPR004678">
    <property type="entry name" value="Cyt_c_oxidase_cbb3_su3"/>
</dbReference>
<dbReference type="InterPro" id="IPR050597">
    <property type="entry name" value="Cytochrome_c_Oxidase_Subunit"/>
</dbReference>
<dbReference type="NCBIfam" id="TIGR00782">
    <property type="entry name" value="ccoP"/>
    <property type="match status" value="1"/>
</dbReference>
<dbReference type="PANTHER" id="PTHR33751">
    <property type="entry name" value="CBB3-TYPE CYTOCHROME C OXIDASE SUBUNIT FIXP"/>
    <property type="match status" value="1"/>
</dbReference>
<dbReference type="PANTHER" id="PTHR33751:SF1">
    <property type="entry name" value="CBB3-TYPE CYTOCHROME C OXIDASE SUBUNIT FIXP"/>
    <property type="match status" value="1"/>
</dbReference>
<dbReference type="Pfam" id="PF00034">
    <property type="entry name" value="Cytochrom_C"/>
    <property type="match status" value="1"/>
</dbReference>
<dbReference type="Pfam" id="PF13442">
    <property type="entry name" value="Cytochrome_CBB3"/>
    <property type="match status" value="1"/>
</dbReference>
<dbReference type="Pfam" id="PF14715">
    <property type="entry name" value="FixP_N"/>
    <property type="match status" value="1"/>
</dbReference>
<dbReference type="PIRSF" id="PIRSF000006">
    <property type="entry name" value="Cbb3-Cox_fixP"/>
    <property type="match status" value="1"/>
</dbReference>
<dbReference type="PRINTS" id="PR00605">
    <property type="entry name" value="CYTCHROMECIC"/>
</dbReference>
<dbReference type="SUPFAM" id="SSF46626">
    <property type="entry name" value="Cytochrome c"/>
    <property type="match status" value="2"/>
</dbReference>
<dbReference type="PROSITE" id="PS51007">
    <property type="entry name" value="CYTC"/>
    <property type="match status" value="2"/>
</dbReference>
<name>FIXP_BRASO</name>
<sequence length="290" mass="30985">MADHSEVDSVSGTATTGHAWDGIKELNTPLPRWWVITFYITIVWAIGYWIVYPAWPTITSNTKGLFGYSSRADVAVELANLEKIRGDKMAALATASLADIEKDPQMLALARAKGKTVFGDNCAACHGTGAAGAKGFPNLNDDDWLWGGSLEQIQQTLLYGVRSGHPKTREGQMLAFGKDGTLKPAEIITVANYVRSLSGLPTRQGYDAAAGAKIFAENCVACHGDNAKGNPEVGAPNLTDKIWLYGSDEATLIETITNGRAGVMPAWEGRLDPTTIKAMAVYVHSLGGGK</sequence>
<comment type="function">
    <text evidence="2 3">C-type cytochrome. Part of the cbb3-type cytochrome c oxidase complex. FixP subunit is required for transferring electrons from donor cytochrome c via its heme groups to FixO subunit. From there, electrons are shuttled to the catalytic binuclear center of FixN subunit where oxygen reduction takes place. The complex also functions as a proton pump (By similarity).</text>
</comment>
<comment type="cofactor">
    <cofactor evidence="2 3">
        <name>heme c</name>
        <dbReference type="ChEBI" id="CHEBI:61717"/>
    </cofactor>
    <text evidence="2 3">Binds 2 heme C groups per subunit.</text>
</comment>
<comment type="pathway">
    <text evidence="1">Energy metabolism; oxidative phosphorylation.</text>
</comment>
<comment type="subunit">
    <text evidence="1">Component of the cbb3-type cytochrome c oxidase at least composed of FixN, FixO, FixQ and FixP.</text>
</comment>
<comment type="subcellular location">
    <subcellularLocation>
        <location evidence="5 6">Cell inner membrane</location>
        <topology evidence="5 6">Single-pass membrane protein</topology>
    </subcellularLocation>
</comment>
<comment type="similarity">
    <text evidence="8">Belongs to the CcoP / FixP family.</text>
</comment>
<gene>
    <name evidence="3" type="primary">fixP</name>
    <name evidence="9" type="synonym">ccoP</name>
    <name type="ordered locus">BRADO2441</name>
</gene>
<accession>A4YQU0</accession>
<feature type="chain" id="PRO_0000412297" description="Cbb3-type cytochrome c oxidase subunit FixP">
    <location>
        <begin position="1"/>
        <end position="290"/>
    </location>
</feature>
<feature type="transmembrane region" description="Helical" evidence="6">
    <location>
        <begin position="33"/>
        <end position="53"/>
    </location>
</feature>
<feature type="domain" description="Cytochrome c 1" evidence="7">
    <location>
        <begin position="109"/>
        <end position="198"/>
    </location>
</feature>
<feature type="domain" description="Cytochrome c 2" evidence="7">
    <location>
        <begin position="206"/>
        <end position="287"/>
    </location>
</feature>
<feature type="binding site" description="covalent" evidence="2">
    <location>
        <position position="122"/>
    </location>
    <ligand>
        <name>heme c</name>
        <dbReference type="ChEBI" id="CHEBI:61717"/>
        <label>1</label>
    </ligand>
</feature>
<feature type="binding site" description="covalent" evidence="2">
    <location>
        <position position="125"/>
    </location>
    <ligand>
        <name>heme c</name>
        <dbReference type="ChEBI" id="CHEBI:61717"/>
        <label>1</label>
    </ligand>
</feature>
<feature type="binding site" description="axial binding residue" evidence="2">
    <location>
        <position position="126"/>
    </location>
    <ligand>
        <name>heme c</name>
        <dbReference type="ChEBI" id="CHEBI:61717"/>
        <label>1</label>
    </ligand>
    <ligandPart>
        <name>Fe</name>
        <dbReference type="ChEBI" id="CHEBI:18248"/>
    </ligandPart>
</feature>
<feature type="binding site" description="axial binding residue" evidence="2">
    <location>
        <position position="173"/>
    </location>
    <ligand>
        <name>heme c</name>
        <dbReference type="ChEBI" id="CHEBI:61717"/>
        <label>2</label>
    </ligand>
    <ligandPart>
        <name>Fe</name>
        <dbReference type="ChEBI" id="CHEBI:18248"/>
    </ligandPart>
</feature>
<feature type="binding site" description="covalent" evidence="2">
    <location>
        <position position="219"/>
    </location>
    <ligand>
        <name>heme c</name>
        <dbReference type="ChEBI" id="CHEBI:61717"/>
        <label>2</label>
    </ligand>
</feature>
<feature type="binding site" description="covalent" evidence="2">
    <location>
        <position position="222"/>
    </location>
    <ligand>
        <name>heme c</name>
        <dbReference type="ChEBI" id="CHEBI:61717"/>
        <label>2</label>
    </ligand>
</feature>
<feature type="binding site" description="axial binding residue" evidence="2">
    <location>
        <position position="223"/>
    </location>
    <ligand>
        <name>heme c</name>
        <dbReference type="ChEBI" id="CHEBI:61717"/>
        <label>2</label>
    </ligand>
    <ligandPart>
        <name>Fe</name>
        <dbReference type="ChEBI" id="CHEBI:18248"/>
    </ligandPart>
</feature>
<feature type="binding site" description="axial binding residue" evidence="2">
    <location>
        <position position="264"/>
    </location>
    <ligand>
        <name>heme c</name>
        <dbReference type="ChEBI" id="CHEBI:61717"/>
        <label>1</label>
    </ligand>
    <ligandPart>
        <name>Fe</name>
        <dbReference type="ChEBI" id="CHEBI:18248"/>
    </ligandPart>
</feature>
<protein>
    <recommendedName>
        <fullName evidence="1">Cbb3-type cytochrome c oxidase subunit FixP</fullName>
        <shortName evidence="1">Cbb3-Cox subunit FixP</shortName>
    </recommendedName>
    <alternativeName>
        <fullName evidence="4">C-type cytochrome FixP</fullName>
        <shortName evidence="1">Cyt c(FixP)</shortName>
    </alternativeName>
    <alternativeName>
        <fullName evidence="1">Cytochrome c oxidase subunit III</fullName>
    </alternativeName>
</protein>
<organism>
    <name type="scientific">Bradyrhizobium sp. (strain ORS 278)</name>
    <dbReference type="NCBI Taxonomy" id="114615"/>
    <lineage>
        <taxon>Bacteria</taxon>
        <taxon>Pseudomonadati</taxon>
        <taxon>Pseudomonadota</taxon>
        <taxon>Alphaproteobacteria</taxon>
        <taxon>Hyphomicrobiales</taxon>
        <taxon>Nitrobacteraceae</taxon>
        <taxon>Bradyrhizobium</taxon>
    </lineage>
</organism>